<accession>P83148</accession>
<evidence type="ECO:0000256" key="1">
    <source>
        <dbReference type="SAM" id="MobiDB-lite"/>
    </source>
</evidence>
<evidence type="ECO:0000269" key="2">
    <source>
    </source>
</evidence>
<evidence type="ECO:0000303" key="3">
    <source>
    </source>
</evidence>
<evidence type="ECO:0000305" key="4"/>
<reference evidence="4" key="1">
    <citation type="journal article" date="2001" name="J. Biol. Chem.">
        <title>Purification and characterization of a novel calcium-binding protein from the extrapallial fluid of the mollusc, Mytilus edulis.</title>
        <authorList>
            <person name="Hattan S.J."/>
            <person name="Laue T.M."/>
            <person name="Chasteen N.D."/>
        </authorList>
    </citation>
    <scope>PROTEIN SEQUENCE</scope>
    <scope>SUBUNIT</scope>
    <scope>GLYCOSYLATION</scope>
    <scope>MASS SPECTROMETRY</scope>
    <source>
        <tissue>Extrapallial fluid</tissue>
    </source>
</reference>
<name>MEFP_MYTED</name>
<keyword id="KW-0106">Calcium</keyword>
<keyword id="KW-0903">Direct protein sequencing</keyword>
<keyword id="KW-0325">Glycoprotein</keyword>
<proteinExistence type="evidence at protein level"/>
<sequence>NPVDDHHDDHHDAPIVEHHD</sequence>
<feature type="chain" id="PRO_0000096399" description="Major extrapallial fluid protein">
    <location>
        <begin position="1"/>
        <end position="20" status="greater than"/>
    </location>
</feature>
<feature type="region of interest" description="Disordered" evidence="1">
    <location>
        <begin position="1"/>
        <end position="20"/>
    </location>
</feature>
<feature type="non-terminal residue" evidence="3">
    <location>
        <position position="20"/>
    </location>
</feature>
<comment type="function">
    <text evidence="2 3">Appears to be a building block of the soluble organic matrix of the shell. The protein binds calcium.</text>
</comment>
<comment type="subunit">
    <text evidence="2">Homodimer.</text>
</comment>
<comment type="PTM">
    <text evidence="2">Glycosylated.</text>
</comment>
<comment type="mass spectrometry"/>
<dbReference type="GO" id="GO:0005509">
    <property type="term" value="F:calcium ion binding"/>
    <property type="evidence" value="ECO:0000304"/>
    <property type="project" value="UniProtKB"/>
</dbReference>
<protein>
    <recommendedName>
        <fullName>Major extrapallial fluid protein</fullName>
        <shortName>EP protein</shortName>
    </recommendedName>
</protein>
<organism evidence="4">
    <name type="scientific">Mytilus edulis</name>
    <name type="common">Blue mussel</name>
    <dbReference type="NCBI Taxonomy" id="6550"/>
    <lineage>
        <taxon>Eukaryota</taxon>
        <taxon>Metazoa</taxon>
        <taxon>Spiralia</taxon>
        <taxon>Lophotrochozoa</taxon>
        <taxon>Mollusca</taxon>
        <taxon>Bivalvia</taxon>
        <taxon>Autobranchia</taxon>
        <taxon>Pteriomorphia</taxon>
        <taxon>Mytilida</taxon>
        <taxon>Mytiloidea</taxon>
        <taxon>Mytilidae</taxon>
        <taxon>Mytilinae</taxon>
        <taxon>Mytilus</taxon>
    </lineage>
</organism>